<gene>
    <name evidence="4" type="primary">ipdE2</name>
    <name evidence="6" type="ordered locus">MSMEG_6016</name>
</gene>
<name>IPDE2_MYCS2</name>
<evidence type="ECO:0000250" key="1">
    <source>
        <dbReference type="UniProtKB" id="I6Y3Q0"/>
    </source>
</evidence>
<evidence type="ECO:0000250" key="2">
    <source>
        <dbReference type="UniProtKB" id="I6YCF5"/>
    </source>
</evidence>
<evidence type="ECO:0000269" key="3">
    <source>
    </source>
</evidence>
<evidence type="ECO:0000303" key="4">
    <source>
    </source>
</evidence>
<evidence type="ECO:0000305" key="5"/>
<evidence type="ECO:0000312" key="6">
    <source>
        <dbReference type="EMBL" id="ABK70325.1"/>
    </source>
</evidence>
<sequence length="311" mass="33149">MSEERELLRETVAALVEKHASPEAVRAAMESELGYDPNLWRLLCEQVGAAALVIPEEFGGAGGELADAAVVLEELGKALVPTPLLGTTLAEIALLSVGRTEPLEELAEGAKIGTVVFNPEFVINGDIADIMIAADGETLTQWDTFTAQPKPTMDMTRRLASVIPGATTTLGDDQGLADTAALLMAAEQIGAASRCLDLTVAYSKDRVQFGRPIGSFQALKHRMADLYVKVASARAVVHDSIATPSSTSAALARYFASEALSAVTSEAVQIHGGIAITWEHDIQLYFKRAHGSAQLLGPPREQLRRLEAEVF</sequence>
<protein>
    <recommendedName>
        <fullName evidence="5">Acyl-CoA dehydrogenase IpdE2</fullName>
        <ecNumber evidence="2">1.3.99.-</ecNumber>
    </recommendedName>
    <alternativeName>
        <fullName evidence="5">5OH-HIP-CoA dehydrogenase beta subunit</fullName>
    </alternativeName>
</protein>
<reference key="1">
    <citation type="submission" date="2006-10" db="EMBL/GenBank/DDBJ databases">
        <authorList>
            <person name="Fleischmann R.D."/>
            <person name="Dodson R.J."/>
            <person name="Haft D.H."/>
            <person name="Merkel J.S."/>
            <person name="Nelson W.C."/>
            <person name="Fraser C.M."/>
        </authorList>
    </citation>
    <scope>NUCLEOTIDE SEQUENCE [LARGE SCALE GENOMIC DNA]</scope>
    <source>
        <strain>ATCC 700084 / mc(2)155</strain>
    </source>
</reference>
<reference key="2">
    <citation type="journal article" date="2020" name="Biochemistry">
        <title>IpdE1-IpdE2 is a heterotetrameric acyl coenzyme A dehydrogenase that is widely distributed in steroid-degrading bacteria.</title>
        <authorList>
            <person name="Gadbery J.E."/>
            <person name="Round J.W."/>
            <person name="Yuan T."/>
            <person name="Wipperman M.F."/>
            <person name="Story K.T."/>
            <person name="Crowe A.M."/>
            <person name="Casabon I."/>
            <person name="Liu J."/>
            <person name="Yang X."/>
            <person name="Eltis L.D."/>
            <person name="Sampson N.S."/>
        </authorList>
    </citation>
    <scope>PATHWAY</scope>
    <scope>DISRUPTION PHENOTYPE</scope>
</reference>
<comment type="function">
    <text evidence="2">Involved in cholesterol degradation. Catalyzes the dehydrogenation of 5OH-HIP-CoA to 5OH-HIPE-CoA.</text>
</comment>
<comment type="catalytic activity">
    <reaction evidence="2">
        <text>3-[(3aS,4S,5R,7aS)-5-hydroxy-7a-methyl-1-oxo-octahydro-1H-inden-4-yl]propanoyl-CoA + A = (2E)-3-[(3aS,4S,5R,7aS)-5-hydroxy-7a-methyl-1-oxo-octahydro-1H-inden-4-yl]prop-2-enoyl-CoA + AH2</text>
        <dbReference type="Rhea" id="RHEA:66348"/>
        <dbReference type="ChEBI" id="CHEBI:13193"/>
        <dbReference type="ChEBI" id="CHEBI:17499"/>
        <dbReference type="ChEBI" id="CHEBI:83738"/>
        <dbReference type="ChEBI" id="CHEBI:167059"/>
    </reaction>
    <physiologicalReaction direction="left-to-right" evidence="2">
        <dbReference type="Rhea" id="RHEA:66349"/>
    </physiologicalReaction>
</comment>
<comment type="cofactor">
    <cofactor evidence="2">
        <name>FAD</name>
        <dbReference type="ChEBI" id="CHEBI:57692"/>
    </cofactor>
    <text evidence="2">Binds 2 FAD per heterotetramer.</text>
</comment>
<comment type="pathway">
    <text evidence="3">Steroid metabolism; cholesterol degradation.</text>
</comment>
<comment type="subunit">
    <text evidence="2">Heterotetramer composed of 2 IpdE1 subunits and 2 IpdE2 subunits.</text>
</comment>
<comment type="disruption phenotype">
    <text evidence="3">Deletion mutant grows normally on glycerol but shows impaired growth on cholesterol. It accumulates 5OH-HIP in the culture supernatant.</text>
</comment>
<comment type="similarity">
    <text evidence="5">Belongs to the acyl-CoA dehydrogenase family.</text>
</comment>
<organism>
    <name type="scientific">Mycolicibacterium smegmatis (strain ATCC 700084 / mc(2)155)</name>
    <name type="common">Mycobacterium smegmatis</name>
    <dbReference type="NCBI Taxonomy" id="246196"/>
    <lineage>
        <taxon>Bacteria</taxon>
        <taxon>Bacillati</taxon>
        <taxon>Actinomycetota</taxon>
        <taxon>Actinomycetes</taxon>
        <taxon>Mycobacteriales</taxon>
        <taxon>Mycobacteriaceae</taxon>
        <taxon>Mycolicibacterium</taxon>
    </lineage>
</organism>
<dbReference type="EC" id="1.3.99.-" evidence="2"/>
<dbReference type="EMBL" id="CP000480">
    <property type="protein sequence ID" value="ABK70325.1"/>
    <property type="molecule type" value="Genomic_DNA"/>
</dbReference>
<dbReference type="RefSeq" id="WP_011730975.1">
    <property type="nucleotide sequence ID" value="NZ_SIJM01000017.1"/>
</dbReference>
<dbReference type="RefSeq" id="YP_890240.1">
    <property type="nucleotide sequence ID" value="NC_008596.1"/>
</dbReference>
<dbReference type="SMR" id="A0R502"/>
<dbReference type="STRING" id="246196.MSMEG_6016"/>
<dbReference type="PaxDb" id="246196-MSMEI_5856"/>
<dbReference type="KEGG" id="msb:LJ00_29745"/>
<dbReference type="KEGG" id="msm:MSMEG_6016"/>
<dbReference type="PATRIC" id="fig|246196.19.peg.5853"/>
<dbReference type="eggNOG" id="COG1960">
    <property type="taxonomic scope" value="Bacteria"/>
</dbReference>
<dbReference type="OrthoDB" id="8677713at2"/>
<dbReference type="UniPathway" id="UPA01058"/>
<dbReference type="Proteomes" id="UP000000757">
    <property type="component" value="Chromosome"/>
</dbReference>
<dbReference type="GO" id="GO:0003995">
    <property type="term" value="F:acyl-CoA dehydrogenase activity"/>
    <property type="evidence" value="ECO:0007669"/>
    <property type="project" value="TreeGrafter"/>
</dbReference>
<dbReference type="GO" id="GO:0050660">
    <property type="term" value="F:flavin adenine dinucleotide binding"/>
    <property type="evidence" value="ECO:0007669"/>
    <property type="project" value="InterPro"/>
</dbReference>
<dbReference type="GO" id="GO:0006707">
    <property type="term" value="P:cholesterol catabolic process"/>
    <property type="evidence" value="ECO:0007669"/>
    <property type="project" value="UniProtKB-UniPathway"/>
</dbReference>
<dbReference type="Gene3D" id="1.10.540.10">
    <property type="entry name" value="Acyl-CoA dehydrogenase/oxidase, N-terminal domain"/>
    <property type="match status" value="1"/>
</dbReference>
<dbReference type="Gene3D" id="1.20.140.10">
    <property type="entry name" value="Butyryl-CoA Dehydrogenase, subunit A, domain 3"/>
    <property type="match status" value="1"/>
</dbReference>
<dbReference type="InterPro" id="IPR036250">
    <property type="entry name" value="AcylCo_DH-like_C"/>
</dbReference>
<dbReference type="InterPro" id="IPR009075">
    <property type="entry name" value="AcylCo_DH/oxidase_C"/>
</dbReference>
<dbReference type="InterPro" id="IPR013786">
    <property type="entry name" value="AcylCoA_DH/ox_N"/>
</dbReference>
<dbReference type="InterPro" id="IPR037069">
    <property type="entry name" value="AcylCoA_DH/ox_N_sf"/>
</dbReference>
<dbReference type="InterPro" id="IPR009100">
    <property type="entry name" value="AcylCoA_DH/oxidase_NM_dom_sf"/>
</dbReference>
<dbReference type="PANTHER" id="PTHR43884">
    <property type="entry name" value="ACYL-COA DEHYDROGENASE"/>
    <property type="match status" value="1"/>
</dbReference>
<dbReference type="PANTHER" id="PTHR43884:SF20">
    <property type="entry name" value="ACYL-COA DEHYDROGENASE FADE28"/>
    <property type="match status" value="1"/>
</dbReference>
<dbReference type="Pfam" id="PF00441">
    <property type="entry name" value="Acyl-CoA_dh_1"/>
    <property type="match status" value="1"/>
</dbReference>
<dbReference type="Pfam" id="PF02771">
    <property type="entry name" value="Acyl-CoA_dh_N"/>
    <property type="match status" value="1"/>
</dbReference>
<dbReference type="SUPFAM" id="SSF47203">
    <property type="entry name" value="Acyl-CoA dehydrogenase C-terminal domain-like"/>
    <property type="match status" value="1"/>
</dbReference>
<dbReference type="SUPFAM" id="SSF56645">
    <property type="entry name" value="Acyl-CoA dehydrogenase NM domain-like"/>
    <property type="match status" value="1"/>
</dbReference>
<keyword id="KW-0153">Cholesterol metabolism</keyword>
<keyword id="KW-0274">FAD</keyword>
<keyword id="KW-0285">Flavoprotein</keyword>
<keyword id="KW-0443">Lipid metabolism</keyword>
<keyword id="KW-0560">Oxidoreductase</keyword>
<keyword id="KW-1185">Reference proteome</keyword>
<keyword id="KW-0753">Steroid metabolism</keyword>
<keyword id="KW-1207">Sterol metabolism</keyword>
<accession>A0R502</accession>
<proteinExistence type="inferred from homology"/>
<feature type="chain" id="PRO_0000452318" description="Acyl-CoA dehydrogenase IpdE2">
    <location>
        <begin position="1"/>
        <end position="311"/>
    </location>
</feature>
<feature type="binding site" evidence="1">
    <location>
        <position position="206"/>
    </location>
    <ligand>
        <name>FAD</name>
        <dbReference type="ChEBI" id="CHEBI:57692"/>
    </ligand>
</feature>
<feature type="binding site" evidence="1">
    <location>
        <position position="273"/>
    </location>
    <ligand>
        <name>FAD</name>
        <dbReference type="ChEBI" id="CHEBI:57692"/>
    </ligand>
</feature>